<reference key="1">
    <citation type="submission" date="2007-02" db="EMBL/GenBank/DDBJ databases">
        <title>Complete sequence of chromosome of Yersinia pestis Pestoides F.</title>
        <authorList>
            <consortium name="US DOE Joint Genome Institute"/>
            <person name="Copeland A."/>
            <person name="Lucas S."/>
            <person name="Lapidus A."/>
            <person name="Barry K."/>
            <person name="Detter J.C."/>
            <person name="Glavina del Rio T."/>
            <person name="Hammon N."/>
            <person name="Israni S."/>
            <person name="Dalin E."/>
            <person name="Tice H."/>
            <person name="Pitluck S."/>
            <person name="Di Bartolo G."/>
            <person name="Chain P."/>
            <person name="Malfatti S."/>
            <person name="Shin M."/>
            <person name="Vergez L."/>
            <person name="Schmutz J."/>
            <person name="Larimer F."/>
            <person name="Land M."/>
            <person name="Hauser L."/>
            <person name="Worsham P."/>
            <person name="Chu M."/>
            <person name="Bearden S."/>
            <person name="Garcia E."/>
            <person name="Richardson P."/>
        </authorList>
    </citation>
    <scope>NUCLEOTIDE SEQUENCE [LARGE SCALE GENOMIC DNA]</scope>
    <source>
        <strain>Pestoides F</strain>
    </source>
</reference>
<evidence type="ECO:0000255" key="1">
    <source>
        <dbReference type="HAMAP-Rule" id="MF_00075"/>
    </source>
</evidence>
<organism>
    <name type="scientific">Yersinia pestis (strain Pestoides F)</name>
    <dbReference type="NCBI Taxonomy" id="386656"/>
    <lineage>
        <taxon>Bacteria</taxon>
        <taxon>Pseudomonadati</taxon>
        <taxon>Pseudomonadota</taxon>
        <taxon>Gammaproteobacteria</taxon>
        <taxon>Enterobacterales</taxon>
        <taxon>Yersiniaceae</taxon>
        <taxon>Yersinia</taxon>
    </lineage>
</organism>
<keyword id="KW-0963">Cytoplasm</keyword>
<keyword id="KW-0396">Initiation factor</keyword>
<keyword id="KW-0648">Protein biosynthesis</keyword>
<keyword id="KW-0694">RNA-binding</keyword>
<keyword id="KW-0699">rRNA-binding</keyword>
<accession>A4TN38</accession>
<name>IF1_YERPP</name>
<comment type="function">
    <text evidence="1">One of the essential components for the initiation of protein synthesis. Stabilizes the binding of IF-2 and IF-3 on the 30S subunit to which N-formylmethionyl-tRNA(fMet) subsequently binds. Helps modulate mRNA selection, yielding the 30S pre-initiation complex (PIC). Upon addition of the 50S ribosomal subunit IF-1, IF-2 and IF-3 are released leaving the mature 70S translation initiation complex.</text>
</comment>
<comment type="subunit">
    <text evidence="1">Component of the 30S ribosomal translation pre-initiation complex which assembles on the 30S ribosome in the order IF-2 and IF-3, IF-1 and N-formylmethionyl-tRNA(fMet); mRNA recruitment can occur at any time during PIC assembly.</text>
</comment>
<comment type="subcellular location">
    <subcellularLocation>
        <location evidence="1">Cytoplasm</location>
    </subcellularLocation>
</comment>
<comment type="similarity">
    <text evidence="1">Belongs to the IF-1 family.</text>
</comment>
<feature type="chain" id="PRO_0000338952" description="Translation initiation factor IF-1">
    <location>
        <begin position="1"/>
        <end position="72"/>
    </location>
</feature>
<feature type="domain" description="S1-like" evidence="1">
    <location>
        <begin position="1"/>
        <end position="72"/>
    </location>
</feature>
<dbReference type="EMBL" id="CP000668">
    <property type="protein sequence ID" value="ABP40700.1"/>
    <property type="molecule type" value="Genomic_DNA"/>
</dbReference>
<dbReference type="RefSeq" id="WP_002211347.1">
    <property type="nucleotide sequence ID" value="NZ_CP009715.1"/>
</dbReference>
<dbReference type="SMR" id="A4TN38"/>
<dbReference type="GeneID" id="98387575"/>
<dbReference type="KEGG" id="ypp:YPDSF_2325"/>
<dbReference type="PATRIC" id="fig|386656.14.peg.3822"/>
<dbReference type="GO" id="GO:0005829">
    <property type="term" value="C:cytosol"/>
    <property type="evidence" value="ECO:0007669"/>
    <property type="project" value="TreeGrafter"/>
</dbReference>
<dbReference type="GO" id="GO:0043022">
    <property type="term" value="F:ribosome binding"/>
    <property type="evidence" value="ECO:0007669"/>
    <property type="project" value="UniProtKB-UniRule"/>
</dbReference>
<dbReference type="GO" id="GO:0019843">
    <property type="term" value="F:rRNA binding"/>
    <property type="evidence" value="ECO:0007669"/>
    <property type="project" value="UniProtKB-UniRule"/>
</dbReference>
<dbReference type="GO" id="GO:0003743">
    <property type="term" value="F:translation initiation factor activity"/>
    <property type="evidence" value="ECO:0007669"/>
    <property type="project" value="UniProtKB-UniRule"/>
</dbReference>
<dbReference type="CDD" id="cd04451">
    <property type="entry name" value="S1_IF1"/>
    <property type="match status" value="1"/>
</dbReference>
<dbReference type="FunFam" id="2.40.50.140:FF:000002">
    <property type="entry name" value="Translation initiation factor IF-1"/>
    <property type="match status" value="1"/>
</dbReference>
<dbReference type="Gene3D" id="2.40.50.140">
    <property type="entry name" value="Nucleic acid-binding proteins"/>
    <property type="match status" value="1"/>
</dbReference>
<dbReference type="HAMAP" id="MF_00075">
    <property type="entry name" value="IF_1"/>
    <property type="match status" value="1"/>
</dbReference>
<dbReference type="InterPro" id="IPR012340">
    <property type="entry name" value="NA-bd_OB-fold"/>
</dbReference>
<dbReference type="InterPro" id="IPR006196">
    <property type="entry name" value="RNA-binding_domain_S1_IF1"/>
</dbReference>
<dbReference type="InterPro" id="IPR003029">
    <property type="entry name" value="S1_domain"/>
</dbReference>
<dbReference type="InterPro" id="IPR004368">
    <property type="entry name" value="TIF_IF1"/>
</dbReference>
<dbReference type="NCBIfam" id="TIGR00008">
    <property type="entry name" value="infA"/>
    <property type="match status" value="1"/>
</dbReference>
<dbReference type="PANTHER" id="PTHR33370">
    <property type="entry name" value="TRANSLATION INITIATION FACTOR IF-1, CHLOROPLASTIC"/>
    <property type="match status" value="1"/>
</dbReference>
<dbReference type="PANTHER" id="PTHR33370:SF1">
    <property type="entry name" value="TRANSLATION INITIATION FACTOR IF-1, CHLOROPLASTIC"/>
    <property type="match status" value="1"/>
</dbReference>
<dbReference type="Pfam" id="PF01176">
    <property type="entry name" value="eIF-1a"/>
    <property type="match status" value="1"/>
</dbReference>
<dbReference type="SMART" id="SM00316">
    <property type="entry name" value="S1"/>
    <property type="match status" value="1"/>
</dbReference>
<dbReference type="SUPFAM" id="SSF50249">
    <property type="entry name" value="Nucleic acid-binding proteins"/>
    <property type="match status" value="1"/>
</dbReference>
<dbReference type="PROSITE" id="PS50832">
    <property type="entry name" value="S1_IF1_TYPE"/>
    <property type="match status" value="1"/>
</dbReference>
<protein>
    <recommendedName>
        <fullName evidence="1">Translation initiation factor IF-1</fullName>
    </recommendedName>
</protein>
<proteinExistence type="inferred from homology"/>
<gene>
    <name evidence="1" type="primary">infA</name>
    <name type="ordered locus">YPDSF_2325</name>
</gene>
<sequence length="72" mass="8236">MAKEDNIEMQGTVLDTLPNTMFRVELENGHVVTAHISGKMRKNYIRILTGDKVTVELTPYDLSKGRIVFRSR</sequence>